<sequence>MEITFQKVEHRYQYKTPFERRALYDVDVSFPSGGYYAIIGHTGSGKSTMIQHLNGLLQPTNGTVQIGERFISAGKKEKKLKPLRKKVGVVFQFPEHQLFEETVEKDICFGPTNFGVSEEAAKQKAREAIELVGLEPELLARSPFELSGGQMRRVAIAGVLAMEPEVLVLDEPTAGLDPKGQNELMEMFYKLHKEKGLTVILVTHNMEDAAKYAEQIVVMHKGTVFLQGSAEEVFSHADELEKIGVDLPMSLKYKRAIEEKFGISIPKATLSLEDLTHEVVQVLRKGGHESCSS</sequence>
<evidence type="ECO:0000255" key="1">
    <source>
        <dbReference type="HAMAP-Rule" id="MF_01710"/>
    </source>
</evidence>
<proteinExistence type="inferred from homology"/>
<organism>
    <name type="scientific">Bacillus thuringiensis (strain Al Hakam)</name>
    <dbReference type="NCBI Taxonomy" id="412694"/>
    <lineage>
        <taxon>Bacteria</taxon>
        <taxon>Bacillati</taxon>
        <taxon>Bacillota</taxon>
        <taxon>Bacilli</taxon>
        <taxon>Bacillales</taxon>
        <taxon>Bacillaceae</taxon>
        <taxon>Bacillus</taxon>
        <taxon>Bacillus cereus group</taxon>
    </lineage>
</organism>
<dbReference type="EC" id="7.-.-.-" evidence="1"/>
<dbReference type="EMBL" id="CP000485">
    <property type="protein sequence ID" value="ABK83552.1"/>
    <property type="molecule type" value="Genomic_DNA"/>
</dbReference>
<dbReference type="RefSeq" id="WP_000406540.1">
    <property type="nucleotide sequence ID" value="NC_008600.1"/>
</dbReference>
<dbReference type="SMR" id="A0R8K9"/>
<dbReference type="KEGG" id="btl:BALH_0137"/>
<dbReference type="HOGENOM" id="CLU_000604_1_22_9"/>
<dbReference type="GO" id="GO:0043190">
    <property type="term" value="C:ATP-binding cassette (ABC) transporter complex"/>
    <property type="evidence" value="ECO:0007669"/>
    <property type="project" value="TreeGrafter"/>
</dbReference>
<dbReference type="GO" id="GO:0005524">
    <property type="term" value="F:ATP binding"/>
    <property type="evidence" value="ECO:0007669"/>
    <property type="project" value="UniProtKB-KW"/>
</dbReference>
<dbReference type="GO" id="GO:0016887">
    <property type="term" value="F:ATP hydrolysis activity"/>
    <property type="evidence" value="ECO:0007669"/>
    <property type="project" value="InterPro"/>
</dbReference>
<dbReference type="GO" id="GO:0042626">
    <property type="term" value="F:ATPase-coupled transmembrane transporter activity"/>
    <property type="evidence" value="ECO:0007669"/>
    <property type="project" value="TreeGrafter"/>
</dbReference>
<dbReference type="CDD" id="cd03225">
    <property type="entry name" value="ABC_cobalt_CbiO_domain1"/>
    <property type="match status" value="1"/>
</dbReference>
<dbReference type="FunFam" id="3.40.50.300:FF:000224">
    <property type="entry name" value="Energy-coupling factor transporter ATP-binding protein EcfA"/>
    <property type="match status" value="1"/>
</dbReference>
<dbReference type="Gene3D" id="3.40.50.300">
    <property type="entry name" value="P-loop containing nucleotide triphosphate hydrolases"/>
    <property type="match status" value="1"/>
</dbReference>
<dbReference type="InterPro" id="IPR003593">
    <property type="entry name" value="AAA+_ATPase"/>
</dbReference>
<dbReference type="InterPro" id="IPR003439">
    <property type="entry name" value="ABC_transporter-like_ATP-bd"/>
</dbReference>
<dbReference type="InterPro" id="IPR017871">
    <property type="entry name" value="ABC_transporter-like_CS"/>
</dbReference>
<dbReference type="InterPro" id="IPR015856">
    <property type="entry name" value="ABC_transpr_CbiO/EcfA_su"/>
</dbReference>
<dbReference type="InterPro" id="IPR050095">
    <property type="entry name" value="ECF_ABC_transporter_ATP-bd"/>
</dbReference>
<dbReference type="InterPro" id="IPR030946">
    <property type="entry name" value="EcfA2"/>
</dbReference>
<dbReference type="InterPro" id="IPR027417">
    <property type="entry name" value="P-loop_NTPase"/>
</dbReference>
<dbReference type="NCBIfam" id="TIGR04521">
    <property type="entry name" value="ECF_ATPase_2"/>
    <property type="match status" value="1"/>
</dbReference>
<dbReference type="NCBIfam" id="NF010155">
    <property type="entry name" value="PRK13634.1"/>
    <property type="match status" value="1"/>
</dbReference>
<dbReference type="PANTHER" id="PTHR43553:SF27">
    <property type="entry name" value="ENERGY-COUPLING FACTOR TRANSPORTER ATP-BINDING PROTEIN ECFA2"/>
    <property type="match status" value="1"/>
</dbReference>
<dbReference type="PANTHER" id="PTHR43553">
    <property type="entry name" value="HEAVY METAL TRANSPORTER"/>
    <property type="match status" value="1"/>
</dbReference>
<dbReference type="Pfam" id="PF00005">
    <property type="entry name" value="ABC_tran"/>
    <property type="match status" value="1"/>
</dbReference>
<dbReference type="SMART" id="SM00382">
    <property type="entry name" value="AAA"/>
    <property type="match status" value="1"/>
</dbReference>
<dbReference type="SUPFAM" id="SSF52540">
    <property type="entry name" value="P-loop containing nucleoside triphosphate hydrolases"/>
    <property type="match status" value="1"/>
</dbReference>
<dbReference type="PROSITE" id="PS00211">
    <property type="entry name" value="ABC_TRANSPORTER_1"/>
    <property type="match status" value="1"/>
</dbReference>
<dbReference type="PROSITE" id="PS50893">
    <property type="entry name" value="ABC_TRANSPORTER_2"/>
    <property type="match status" value="1"/>
</dbReference>
<dbReference type="PROSITE" id="PS51246">
    <property type="entry name" value="CBIO"/>
    <property type="match status" value="1"/>
</dbReference>
<protein>
    <recommendedName>
        <fullName evidence="1">Energy-coupling factor transporter ATP-binding protein EcfA2</fullName>
        <shortName evidence="1">ECF transporter A component EcfA2</shortName>
        <ecNumber evidence="1">7.-.-.-</ecNumber>
    </recommendedName>
</protein>
<keyword id="KW-0067">ATP-binding</keyword>
<keyword id="KW-1003">Cell membrane</keyword>
<keyword id="KW-0472">Membrane</keyword>
<keyword id="KW-0547">Nucleotide-binding</keyword>
<keyword id="KW-1278">Translocase</keyword>
<keyword id="KW-0813">Transport</keyword>
<gene>
    <name evidence="1" type="primary">ecfA2</name>
    <name type="synonym">cbiO2</name>
    <name type="ordered locus">BALH_0137</name>
</gene>
<feature type="chain" id="PRO_0000287926" description="Energy-coupling factor transporter ATP-binding protein EcfA2">
    <location>
        <begin position="1"/>
        <end position="293"/>
    </location>
</feature>
<feature type="domain" description="ABC transporter" evidence="1">
    <location>
        <begin position="3"/>
        <end position="246"/>
    </location>
</feature>
<feature type="binding site" evidence="1">
    <location>
        <begin position="40"/>
        <end position="47"/>
    </location>
    <ligand>
        <name>ATP</name>
        <dbReference type="ChEBI" id="CHEBI:30616"/>
    </ligand>
</feature>
<name>ECFA2_BACAH</name>
<accession>A0R8K9</accession>
<reference key="1">
    <citation type="journal article" date="2007" name="J. Bacteriol.">
        <title>The complete genome sequence of Bacillus thuringiensis Al Hakam.</title>
        <authorList>
            <person name="Challacombe J.F."/>
            <person name="Altherr M.R."/>
            <person name="Xie G."/>
            <person name="Bhotika S.S."/>
            <person name="Brown N."/>
            <person name="Bruce D."/>
            <person name="Campbell C.S."/>
            <person name="Campbell M.L."/>
            <person name="Chen J."/>
            <person name="Chertkov O."/>
            <person name="Cleland C."/>
            <person name="Dimitrijevic M."/>
            <person name="Doggett N.A."/>
            <person name="Fawcett J.J."/>
            <person name="Glavina T."/>
            <person name="Goodwin L.A."/>
            <person name="Green L.D."/>
            <person name="Han C.S."/>
            <person name="Hill K.K."/>
            <person name="Hitchcock P."/>
            <person name="Jackson P.J."/>
            <person name="Keim P."/>
            <person name="Kewalramani A.R."/>
            <person name="Longmire J."/>
            <person name="Lucas S."/>
            <person name="Malfatti S."/>
            <person name="Martinez D."/>
            <person name="McMurry K."/>
            <person name="Meincke L.J."/>
            <person name="Misra M."/>
            <person name="Moseman B.L."/>
            <person name="Mundt M."/>
            <person name="Munk A.C."/>
            <person name="Okinaka R.T."/>
            <person name="Parson-Quintana B."/>
            <person name="Reilly L.P."/>
            <person name="Richardson P."/>
            <person name="Robinson D.L."/>
            <person name="Saunders E."/>
            <person name="Tapia R."/>
            <person name="Tesmer J.G."/>
            <person name="Thayer N."/>
            <person name="Thompson L.S."/>
            <person name="Tice H."/>
            <person name="Ticknor L.O."/>
            <person name="Wills P.L."/>
            <person name="Gilna P."/>
            <person name="Brettin T.S."/>
        </authorList>
    </citation>
    <scope>NUCLEOTIDE SEQUENCE [LARGE SCALE GENOMIC DNA]</scope>
    <source>
        <strain>Al Hakam</strain>
    </source>
</reference>
<comment type="function">
    <text evidence="1">ATP-binding (A) component of a common energy-coupling factor (ECF) ABC-transporter complex. Unlike classic ABC transporters this ECF transporter provides the energy necessary to transport a number of different substrates.</text>
</comment>
<comment type="subunit">
    <text evidence="1">Forms a stable energy-coupling factor (ECF) transporter complex composed of 2 membrane-embedded substrate-binding proteins (S component), 2 ATP-binding proteins (A component) and 2 transmembrane proteins (T component).</text>
</comment>
<comment type="subcellular location">
    <subcellularLocation>
        <location evidence="1">Cell membrane</location>
        <topology evidence="1">Peripheral membrane protein</topology>
    </subcellularLocation>
</comment>
<comment type="similarity">
    <text evidence="1">Belongs to the ABC transporter superfamily. Energy-coupling factor EcfA family.</text>
</comment>